<reference key="1">
    <citation type="journal article" date="1997" name="Proc. Natl. Acad. Sci. U.S.A.">
        <title>Cloning of murine RNA polymerase I-specific TAF factors: conserved interactions between the subunits of the species-specific transcription initiation factor TIF-IB/SL1.</title>
        <authorList>
            <person name="Heix J."/>
            <person name="Zomerdijk J.C.B.M."/>
            <person name="Ravanpay A."/>
            <person name="Tjian R."/>
            <person name="Grummt I."/>
        </authorList>
    </citation>
    <scope>NUCLEOTIDE SEQUENCE [MRNA]</scope>
    <scope>FUNCTION</scope>
    <scope>INTERACTION WITH TBP; TAF1B AND TAF1C</scope>
</reference>
<reference key="2">
    <citation type="journal article" date="2005" name="Science">
        <title>The transcriptional landscape of the mammalian genome.</title>
        <authorList>
            <person name="Carninci P."/>
            <person name="Kasukawa T."/>
            <person name="Katayama S."/>
            <person name="Gough J."/>
            <person name="Frith M.C."/>
            <person name="Maeda N."/>
            <person name="Oyama R."/>
            <person name="Ravasi T."/>
            <person name="Lenhard B."/>
            <person name="Wells C."/>
            <person name="Kodzius R."/>
            <person name="Shimokawa K."/>
            <person name="Bajic V.B."/>
            <person name="Brenner S.E."/>
            <person name="Batalov S."/>
            <person name="Forrest A.R."/>
            <person name="Zavolan M."/>
            <person name="Davis M.J."/>
            <person name="Wilming L.G."/>
            <person name="Aidinis V."/>
            <person name="Allen J.E."/>
            <person name="Ambesi-Impiombato A."/>
            <person name="Apweiler R."/>
            <person name="Aturaliya R.N."/>
            <person name="Bailey T.L."/>
            <person name="Bansal M."/>
            <person name="Baxter L."/>
            <person name="Beisel K.W."/>
            <person name="Bersano T."/>
            <person name="Bono H."/>
            <person name="Chalk A.M."/>
            <person name="Chiu K.P."/>
            <person name="Choudhary V."/>
            <person name="Christoffels A."/>
            <person name="Clutterbuck D.R."/>
            <person name="Crowe M.L."/>
            <person name="Dalla E."/>
            <person name="Dalrymple B.P."/>
            <person name="de Bono B."/>
            <person name="Della Gatta G."/>
            <person name="di Bernardo D."/>
            <person name="Down T."/>
            <person name="Engstrom P."/>
            <person name="Fagiolini M."/>
            <person name="Faulkner G."/>
            <person name="Fletcher C.F."/>
            <person name="Fukushima T."/>
            <person name="Furuno M."/>
            <person name="Futaki S."/>
            <person name="Gariboldi M."/>
            <person name="Georgii-Hemming P."/>
            <person name="Gingeras T.R."/>
            <person name="Gojobori T."/>
            <person name="Green R.E."/>
            <person name="Gustincich S."/>
            <person name="Harbers M."/>
            <person name="Hayashi Y."/>
            <person name="Hensch T.K."/>
            <person name="Hirokawa N."/>
            <person name="Hill D."/>
            <person name="Huminiecki L."/>
            <person name="Iacono M."/>
            <person name="Ikeo K."/>
            <person name="Iwama A."/>
            <person name="Ishikawa T."/>
            <person name="Jakt M."/>
            <person name="Kanapin A."/>
            <person name="Katoh M."/>
            <person name="Kawasawa Y."/>
            <person name="Kelso J."/>
            <person name="Kitamura H."/>
            <person name="Kitano H."/>
            <person name="Kollias G."/>
            <person name="Krishnan S.P."/>
            <person name="Kruger A."/>
            <person name="Kummerfeld S.K."/>
            <person name="Kurochkin I.V."/>
            <person name="Lareau L.F."/>
            <person name="Lazarevic D."/>
            <person name="Lipovich L."/>
            <person name="Liu J."/>
            <person name="Liuni S."/>
            <person name="McWilliam S."/>
            <person name="Madan Babu M."/>
            <person name="Madera M."/>
            <person name="Marchionni L."/>
            <person name="Matsuda H."/>
            <person name="Matsuzawa S."/>
            <person name="Miki H."/>
            <person name="Mignone F."/>
            <person name="Miyake S."/>
            <person name="Morris K."/>
            <person name="Mottagui-Tabar S."/>
            <person name="Mulder N."/>
            <person name="Nakano N."/>
            <person name="Nakauchi H."/>
            <person name="Ng P."/>
            <person name="Nilsson R."/>
            <person name="Nishiguchi S."/>
            <person name="Nishikawa S."/>
            <person name="Nori F."/>
            <person name="Ohara O."/>
            <person name="Okazaki Y."/>
            <person name="Orlando V."/>
            <person name="Pang K.C."/>
            <person name="Pavan W.J."/>
            <person name="Pavesi G."/>
            <person name="Pesole G."/>
            <person name="Petrovsky N."/>
            <person name="Piazza S."/>
            <person name="Reed J."/>
            <person name="Reid J.F."/>
            <person name="Ring B.Z."/>
            <person name="Ringwald M."/>
            <person name="Rost B."/>
            <person name="Ruan Y."/>
            <person name="Salzberg S.L."/>
            <person name="Sandelin A."/>
            <person name="Schneider C."/>
            <person name="Schoenbach C."/>
            <person name="Sekiguchi K."/>
            <person name="Semple C.A."/>
            <person name="Seno S."/>
            <person name="Sessa L."/>
            <person name="Sheng Y."/>
            <person name="Shibata Y."/>
            <person name="Shimada H."/>
            <person name="Shimada K."/>
            <person name="Silva D."/>
            <person name="Sinclair B."/>
            <person name="Sperling S."/>
            <person name="Stupka E."/>
            <person name="Sugiura K."/>
            <person name="Sultana R."/>
            <person name="Takenaka Y."/>
            <person name="Taki K."/>
            <person name="Tammoja K."/>
            <person name="Tan S.L."/>
            <person name="Tang S."/>
            <person name="Taylor M.S."/>
            <person name="Tegner J."/>
            <person name="Teichmann S.A."/>
            <person name="Ueda H.R."/>
            <person name="van Nimwegen E."/>
            <person name="Verardo R."/>
            <person name="Wei C.L."/>
            <person name="Yagi K."/>
            <person name="Yamanishi H."/>
            <person name="Zabarovsky E."/>
            <person name="Zhu S."/>
            <person name="Zimmer A."/>
            <person name="Hide W."/>
            <person name="Bult C."/>
            <person name="Grimmond S.M."/>
            <person name="Teasdale R.D."/>
            <person name="Liu E.T."/>
            <person name="Brusic V."/>
            <person name="Quackenbush J."/>
            <person name="Wahlestedt C."/>
            <person name="Mattick J.S."/>
            <person name="Hume D.A."/>
            <person name="Kai C."/>
            <person name="Sasaki D."/>
            <person name="Tomaru Y."/>
            <person name="Fukuda S."/>
            <person name="Kanamori-Katayama M."/>
            <person name="Suzuki M."/>
            <person name="Aoki J."/>
            <person name="Arakawa T."/>
            <person name="Iida J."/>
            <person name="Imamura K."/>
            <person name="Itoh M."/>
            <person name="Kato T."/>
            <person name="Kawaji H."/>
            <person name="Kawagashira N."/>
            <person name="Kawashima T."/>
            <person name="Kojima M."/>
            <person name="Kondo S."/>
            <person name="Konno H."/>
            <person name="Nakano K."/>
            <person name="Ninomiya N."/>
            <person name="Nishio T."/>
            <person name="Okada M."/>
            <person name="Plessy C."/>
            <person name="Shibata K."/>
            <person name="Shiraki T."/>
            <person name="Suzuki S."/>
            <person name="Tagami M."/>
            <person name="Waki K."/>
            <person name="Watahiki A."/>
            <person name="Okamura-Oho Y."/>
            <person name="Suzuki H."/>
            <person name="Kawai J."/>
            <person name="Hayashizaki Y."/>
        </authorList>
    </citation>
    <scope>NUCLEOTIDE SEQUENCE [LARGE SCALE MRNA]</scope>
    <source>
        <strain>C57BL/6J</strain>
        <tissue>Testis</tissue>
    </source>
</reference>
<reference key="3">
    <citation type="journal article" date="2004" name="Genome Res.">
        <title>The status, quality, and expansion of the NIH full-length cDNA project: the Mammalian Gene Collection (MGC).</title>
        <authorList>
            <consortium name="The MGC Project Team"/>
        </authorList>
    </citation>
    <scope>NUCLEOTIDE SEQUENCE [LARGE SCALE MRNA]</scope>
    <source>
        <tissue>Brain</tissue>
    </source>
</reference>
<accession>P97357</accession>
<feature type="chain" id="PRO_0000227988" description="TATA box-binding protein-associated factor RNA polymerase I subunit A">
    <location>
        <begin position="1"/>
        <end position="453"/>
    </location>
</feature>
<name>TAF1A_MOUSE</name>
<comment type="function">
    <text evidence="1 3">Component of the transcription factor SL1/TIF-IB complex, which is involved in the assembly of the PIC (pre-initiation complex) during RNA polymerase I-dependent transcription. The rate of PIC formation probably is primarily dependent on the rate of association of SL1/TIF-IB with the rDNA promoter. SL1/TIF-IB is involved in stabilization of nucleolar transcription factor 1/UBTF on rDNA. Formation of SL1/TIF-IB excludes the association of TBP with TFIID subunits (By similarity).</text>
</comment>
<comment type="subunit">
    <text evidence="2">Component of the transcription factor SL1/TIF-IB complex, composed of TBP and at least TAF1A, TAF1B, TAF1C and TAF1D. In the complex interacts directly with TBP, TAF1A and TAF1B. Interaction of the SL1/TIF-IB subunits with TBP excludes interaction of TBP with the transcription factor IID (TFIID) subunits. Interacts with UBFT (By similarity). Interacts with CEBPA (isoform 1 and isoform 4) (By similarity). Part of Pol I pre-initiation complex (PIC), in which Pol I core assembles with RRN3 and promoter-bound UTBF and SL1/TIF-IB complex.</text>
</comment>
<comment type="subcellular location">
    <subcellularLocation>
        <location evidence="2">Nucleus</location>
        <location evidence="2">Nucleolus</location>
    </subcellularLocation>
</comment>
<protein>
    <recommendedName>
        <fullName>TATA box-binding protein-associated factor RNA polymerase I subunit A</fullName>
    </recommendedName>
    <alternativeName>
        <fullName>RNA polymerase I-specific TBP-associated factor 48 kDa</fullName>
        <shortName>TAFI48</shortName>
    </alternativeName>
    <alternativeName>
        <fullName>TATA box-binding protein-associated factor 1A</fullName>
        <shortName>TBP-associated factor 1A</shortName>
    </alternativeName>
    <alternativeName>
        <fullName>Transcription initiation factor SL1/TIF-IB subunit A</fullName>
    </alternativeName>
</protein>
<organism>
    <name type="scientific">Mus musculus</name>
    <name type="common">Mouse</name>
    <dbReference type="NCBI Taxonomy" id="10090"/>
    <lineage>
        <taxon>Eukaryota</taxon>
        <taxon>Metazoa</taxon>
        <taxon>Chordata</taxon>
        <taxon>Craniata</taxon>
        <taxon>Vertebrata</taxon>
        <taxon>Euteleostomi</taxon>
        <taxon>Mammalia</taxon>
        <taxon>Eutheria</taxon>
        <taxon>Euarchontoglires</taxon>
        <taxon>Glires</taxon>
        <taxon>Rodentia</taxon>
        <taxon>Myomorpha</taxon>
        <taxon>Muroidea</taxon>
        <taxon>Muridae</taxon>
        <taxon>Murinae</taxon>
        <taxon>Mus</taxon>
        <taxon>Mus</taxon>
    </lineage>
</organism>
<evidence type="ECO:0000250" key="1"/>
<evidence type="ECO:0000250" key="2">
    <source>
        <dbReference type="UniProtKB" id="Q15573"/>
    </source>
</evidence>
<evidence type="ECO:0000269" key="3">
    <source>
    </source>
</evidence>
<keyword id="KW-0238">DNA-binding</keyword>
<keyword id="KW-0539">Nucleus</keyword>
<keyword id="KW-1185">Reference proteome</keyword>
<keyword id="KW-0804">Transcription</keyword>
<keyword id="KW-0805">Transcription regulation</keyword>
<proteinExistence type="evidence at protein level"/>
<gene>
    <name type="primary">Taf1a</name>
</gene>
<sequence length="453" mass="52718">MMSDFGEELTKLAVAEDNPETSVLSKTGMHFPWLHKHVEAVVTGGKKRKDFAQTTSACLSFIQEALLKHQWQQAAEYMHSYLQTLEDSDTDKRQAAPEIIWKLGSEILFYHPKSNVETFNSFADRMKNIGVLNYLKISLQHALYLLHHGMLDDANRNLSKAETWRYGEKSSSQEVLINLVQAYKGLLQYYTWTRKKMELSKLDEDDYAYAAKTRTMLSQSCKTSTNICALVKTPGVWDPFVKSYVEMLEFYGDQDGAREMLTNYAYDEKFPSNPNAHVYLYEFLKREKAPRAKLISVLKILHEIVPSHTLMLEFHTLLRKSDTEEHQKLGLSVLFEVLDFAGCNKNITAWKYLAKYLKQILVGSHHEWVEEEWKSRRNWWPAFHFSFFWAKSDWKADTDLACEKAFVAGVLLGKGCKYFRYILKQDHETLKKKIKRMKKSVKKYTIVNPGVHT</sequence>
<dbReference type="EMBL" id="Y09972">
    <property type="protein sequence ID" value="CAA71091.1"/>
    <property type="molecule type" value="mRNA"/>
</dbReference>
<dbReference type="EMBL" id="AK132811">
    <property type="protein sequence ID" value="BAE21371.1"/>
    <property type="molecule type" value="mRNA"/>
</dbReference>
<dbReference type="EMBL" id="BC061106">
    <property type="protein sequence ID" value="AAH61106.1"/>
    <property type="molecule type" value="mRNA"/>
</dbReference>
<dbReference type="RefSeq" id="NP_001264886.1">
    <property type="nucleotide sequence ID" value="NM_001277957.1"/>
</dbReference>
<dbReference type="RefSeq" id="NP_001264887.1">
    <property type="nucleotide sequence ID" value="NM_001277958.1"/>
</dbReference>
<dbReference type="RefSeq" id="NP_001264888.1">
    <property type="nucleotide sequence ID" value="NM_001277959.2"/>
</dbReference>
<dbReference type="RefSeq" id="NP_067441.1">
    <property type="nucleotide sequence ID" value="NM_021466.4"/>
</dbReference>
<dbReference type="BioGRID" id="203956">
    <property type="interactions" value="7"/>
</dbReference>
<dbReference type="CORUM" id="P97357"/>
<dbReference type="DIP" id="DIP-60267N"/>
<dbReference type="FunCoup" id="P97357">
    <property type="interactions" value="1462"/>
</dbReference>
<dbReference type="IntAct" id="P97357">
    <property type="interactions" value="2"/>
</dbReference>
<dbReference type="STRING" id="10090.ENSMUSP00000094808"/>
<dbReference type="iPTMnet" id="P97357"/>
<dbReference type="PhosphoSitePlus" id="P97357"/>
<dbReference type="PaxDb" id="10090-ENSMUSP00000094808"/>
<dbReference type="PeptideAtlas" id="P97357"/>
<dbReference type="ProteomicsDB" id="254491"/>
<dbReference type="Pumba" id="P97357"/>
<dbReference type="Antibodypedia" id="20741">
    <property type="antibodies" value="231 antibodies from 29 providers"/>
</dbReference>
<dbReference type="DNASU" id="21339"/>
<dbReference type="Ensembl" id="ENSMUST00000192076.3">
    <property type="protein sequence ID" value="ENSMUSP00000142213.3"/>
    <property type="gene ID" value="ENSMUSG00000072258.12"/>
</dbReference>
<dbReference type="GeneID" id="21339"/>
<dbReference type="KEGG" id="mmu:21339"/>
<dbReference type="UCSC" id="uc008ida.2">
    <property type="organism name" value="mouse"/>
</dbReference>
<dbReference type="AGR" id="MGI:109578"/>
<dbReference type="CTD" id="9015"/>
<dbReference type="MGI" id="MGI:109578">
    <property type="gene designation" value="Taf1a"/>
</dbReference>
<dbReference type="eggNOG" id="ENOG502R510">
    <property type="taxonomic scope" value="Eukaryota"/>
</dbReference>
<dbReference type="GeneTree" id="ENSGT00390000011405"/>
<dbReference type="InParanoid" id="P97357"/>
<dbReference type="OMA" id="HFTRFHA"/>
<dbReference type="OrthoDB" id="6272197at2759"/>
<dbReference type="PhylomeDB" id="P97357"/>
<dbReference type="Reactome" id="R-MMU-5250924">
    <property type="pathway name" value="B-WICH complex positively regulates rRNA expression"/>
</dbReference>
<dbReference type="Reactome" id="R-MMU-73762">
    <property type="pathway name" value="RNA Polymerase I Transcription Initiation"/>
</dbReference>
<dbReference type="Reactome" id="R-MMU-73772">
    <property type="pathway name" value="RNA Polymerase I Promoter Escape"/>
</dbReference>
<dbReference type="Reactome" id="R-MMU-73863">
    <property type="pathway name" value="RNA Polymerase I Transcription Termination"/>
</dbReference>
<dbReference type="BioGRID-ORCS" id="21339">
    <property type="hits" value="20 hits in 55 CRISPR screens"/>
</dbReference>
<dbReference type="ChiTaRS" id="Taf1a">
    <property type="organism name" value="mouse"/>
</dbReference>
<dbReference type="PRO" id="PR:P97357"/>
<dbReference type="Proteomes" id="UP000000589">
    <property type="component" value="Chromosome 1"/>
</dbReference>
<dbReference type="RNAct" id="P97357">
    <property type="molecule type" value="protein"/>
</dbReference>
<dbReference type="Bgee" id="ENSMUSG00000072258">
    <property type="expression patterns" value="Expressed in primary oocyte and 195 other cell types or tissues"/>
</dbReference>
<dbReference type="ExpressionAtlas" id="P97357">
    <property type="expression patterns" value="baseline and differential"/>
</dbReference>
<dbReference type="GO" id="GO:0015630">
    <property type="term" value="C:microtubule cytoskeleton"/>
    <property type="evidence" value="ECO:0007669"/>
    <property type="project" value="Ensembl"/>
</dbReference>
<dbReference type="GO" id="GO:0005654">
    <property type="term" value="C:nucleoplasm"/>
    <property type="evidence" value="ECO:0000304"/>
    <property type="project" value="Reactome"/>
</dbReference>
<dbReference type="GO" id="GO:0000120">
    <property type="term" value="C:RNA polymerase I transcription regulator complex"/>
    <property type="evidence" value="ECO:0000304"/>
    <property type="project" value="MGI"/>
</dbReference>
<dbReference type="GO" id="GO:0005668">
    <property type="term" value="C:RNA polymerase transcription factor SL1 complex"/>
    <property type="evidence" value="ECO:0000353"/>
    <property type="project" value="MGI"/>
</dbReference>
<dbReference type="GO" id="GO:0003677">
    <property type="term" value="F:DNA binding"/>
    <property type="evidence" value="ECO:0007669"/>
    <property type="project" value="UniProtKB-KW"/>
</dbReference>
<dbReference type="GO" id="GO:0006360">
    <property type="term" value="P:transcription by RNA polymerase I"/>
    <property type="evidence" value="ECO:0000304"/>
    <property type="project" value="MGI"/>
</dbReference>
<dbReference type="InterPro" id="IPR016629">
    <property type="entry name" value="RNA_pol_I_TAF1A/TAFI48_chr"/>
</dbReference>
<dbReference type="InterPro" id="IPR052669">
    <property type="entry name" value="SL1/TIF-IB_Component"/>
</dbReference>
<dbReference type="InterPro" id="IPR039495">
    <property type="entry name" value="TAF1A"/>
</dbReference>
<dbReference type="PANTHER" id="PTHR32122">
    <property type="entry name" value="TATA BOX-BINDING PROTEIN ASSOCIATED FACTOR RNA POLYMERASE I SUBUNIT A"/>
    <property type="match status" value="1"/>
</dbReference>
<dbReference type="PANTHER" id="PTHR32122:SF1">
    <property type="entry name" value="TATA BOX-BINDING PROTEIN-ASSOCIATED FACTOR RNA POLYMERASE I SUBUNIT A"/>
    <property type="match status" value="1"/>
</dbReference>
<dbReference type="Pfam" id="PF14929">
    <property type="entry name" value="TAF1_subA"/>
    <property type="match status" value="1"/>
</dbReference>
<dbReference type="PIRSF" id="PIRSF015161">
    <property type="entry name" value="TAFI48"/>
    <property type="match status" value="1"/>
</dbReference>